<name>Y4424_ARATH</name>
<keyword id="KW-0025">Alternative splicing</keyword>
<keyword id="KW-0129">CBS domain</keyword>
<keyword id="KW-0325">Glycoprotein</keyword>
<keyword id="KW-0472">Membrane</keyword>
<keyword id="KW-1185">Reference proteome</keyword>
<keyword id="KW-0677">Repeat</keyword>
<keyword id="KW-0812">Transmembrane</keyword>
<keyword id="KW-1133">Transmembrane helix</keyword>
<gene>
    <name type="primary">CBSDUF1</name>
    <name type="ordered locus">At4g14240</name>
    <name type="ORF">dl3160c</name>
    <name type="ORF">FCAALL.149</name>
</gene>
<reference key="1">
    <citation type="journal article" date="1998" name="Nature">
        <title>Analysis of 1.9 Mb of contiguous sequence from chromosome 4 of Arabidopsis thaliana.</title>
        <authorList>
            <person name="Bevan M."/>
            <person name="Bancroft I."/>
            <person name="Bent E."/>
            <person name="Love K."/>
            <person name="Goodman H.M."/>
            <person name="Dean C."/>
            <person name="Bergkamp R."/>
            <person name="Dirkse W."/>
            <person name="van Staveren M."/>
            <person name="Stiekema W."/>
            <person name="Drost L."/>
            <person name="Ridley P."/>
            <person name="Hudson S.-A."/>
            <person name="Patel K."/>
            <person name="Murphy G."/>
            <person name="Piffanelli P."/>
            <person name="Wedler H."/>
            <person name="Wedler E."/>
            <person name="Wambutt R."/>
            <person name="Weitzenegger T."/>
            <person name="Pohl T."/>
            <person name="Terryn N."/>
            <person name="Gielen J."/>
            <person name="Villarroel R."/>
            <person name="De Clercq R."/>
            <person name="van Montagu M."/>
            <person name="Lecharny A."/>
            <person name="Aubourg S."/>
            <person name="Gy I."/>
            <person name="Kreis M."/>
            <person name="Lao N."/>
            <person name="Kavanagh T."/>
            <person name="Hempel S."/>
            <person name="Kotter P."/>
            <person name="Entian K.-D."/>
            <person name="Rieger M."/>
            <person name="Schaefer M."/>
            <person name="Funk B."/>
            <person name="Mueller-Auer S."/>
            <person name="Silvey M."/>
            <person name="James R."/>
            <person name="Monfort A."/>
            <person name="Pons A."/>
            <person name="Puigdomenech P."/>
            <person name="Douka A."/>
            <person name="Voukelatou E."/>
            <person name="Milioni D."/>
            <person name="Hatzopoulos P."/>
            <person name="Piravandi E."/>
            <person name="Obermaier B."/>
            <person name="Hilbert H."/>
            <person name="Duesterhoeft A."/>
            <person name="Moores T."/>
            <person name="Jones J.D.G."/>
            <person name="Eneva T."/>
            <person name="Palme K."/>
            <person name="Benes V."/>
            <person name="Rechmann S."/>
            <person name="Ansorge W."/>
            <person name="Cooke R."/>
            <person name="Berger C."/>
            <person name="Delseny M."/>
            <person name="Voet M."/>
            <person name="Volckaert G."/>
            <person name="Mewes H.-W."/>
            <person name="Klosterman S."/>
            <person name="Schueller C."/>
            <person name="Chalwatzis N."/>
        </authorList>
    </citation>
    <scope>NUCLEOTIDE SEQUENCE [LARGE SCALE GENOMIC DNA]</scope>
    <source>
        <strain>cv. Columbia</strain>
    </source>
</reference>
<reference key="2">
    <citation type="journal article" date="1999" name="Nature">
        <title>Sequence and analysis of chromosome 4 of the plant Arabidopsis thaliana.</title>
        <authorList>
            <person name="Mayer K.F.X."/>
            <person name="Schueller C."/>
            <person name="Wambutt R."/>
            <person name="Murphy G."/>
            <person name="Volckaert G."/>
            <person name="Pohl T."/>
            <person name="Duesterhoeft A."/>
            <person name="Stiekema W."/>
            <person name="Entian K.-D."/>
            <person name="Terryn N."/>
            <person name="Harris B."/>
            <person name="Ansorge W."/>
            <person name="Brandt P."/>
            <person name="Grivell L.A."/>
            <person name="Rieger M."/>
            <person name="Weichselgartner M."/>
            <person name="de Simone V."/>
            <person name="Obermaier B."/>
            <person name="Mache R."/>
            <person name="Mueller M."/>
            <person name="Kreis M."/>
            <person name="Delseny M."/>
            <person name="Puigdomenech P."/>
            <person name="Watson M."/>
            <person name="Schmidtheini T."/>
            <person name="Reichert B."/>
            <person name="Portetelle D."/>
            <person name="Perez-Alonso M."/>
            <person name="Boutry M."/>
            <person name="Bancroft I."/>
            <person name="Vos P."/>
            <person name="Hoheisel J."/>
            <person name="Zimmermann W."/>
            <person name="Wedler H."/>
            <person name="Ridley P."/>
            <person name="Langham S.-A."/>
            <person name="McCullagh B."/>
            <person name="Bilham L."/>
            <person name="Robben J."/>
            <person name="van der Schueren J."/>
            <person name="Grymonprez B."/>
            <person name="Chuang Y.-J."/>
            <person name="Vandenbussche F."/>
            <person name="Braeken M."/>
            <person name="Weltjens I."/>
            <person name="Voet M."/>
            <person name="Bastiaens I."/>
            <person name="Aert R."/>
            <person name="Defoor E."/>
            <person name="Weitzenegger T."/>
            <person name="Bothe G."/>
            <person name="Ramsperger U."/>
            <person name="Hilbert H."/>
            <person name="Braun M."/>
            <person name="Holzer E."/>
            <person name="Brandt A."/>
            <person name="Peters S."/>
            <person name="van Staveren M."/>
            <person name="Dirkse W."/>
            <person name="Mooijman P."/>
            <person name="Klein Lankhorst R."/>
            <person name="Rose M."/>
            <person name="Hauf J."/>
            <person name="Koetter P."/>
            <person name="Berneiser S."/>
            <person name="Hempel S."/>
            <person name="Feldpausch M."/>
            <person name="Lamberth S."/>
            <person name="Van den Daele H."/>
            <person name="De Keyser A."/>
            <person name="Buysshaert C."/>
            <person name="Gielen J."/>
            <person name="Villarroel R."/>
            <person name="De Clercq R."/>
            <person name="van Montagu M."/>
            <person name="Rogers J."/>
            <person name="Cronin A."/>
            <person name="Quail M.A."/>
            <person name="Bray-Allen S."/>
            <person name="Clark L."/>
            <person name="Doggett J."/>
            <person name="Hall S."/>
            <person name="Kay M."/>
            <person name="Lennard N."/>
            <person name="McLay K."/>
            <person name="Mayes R."/>
            <person name="Pettett A."/>
            <person name="Rajandream M.A."/>
            <person name="Lyne M."/>
            <person name="Benes V."/>
            <person name="Rechmann S."/>
            <person name="Borkova D."/>
            <person name="Bloecker H."/>
            <person name="Scharfe M."/>
            <person name="Grimm M."/>
            <person name="Loehnert T.-H."/>
            <person name="Dose S."/>
            <person name="de Haan M."/>
            <person name="Maarse A.C."/>
            <person name="Schaefer M."/>
            <person name="Mueller-Auer S."/>
            <person name="Gabel C."/>
            <person name="Fuchs M."/>
            <person name="Fartmann B."/>
            <person name="Granderath K."/>
            <person name="Dauner D."/>
            <person name="Herzl A."/>
            <person name="Neumann S."/>
            <person name="Argiriou A."/>
            <person name="Vitale D."/>
            <person name="Liguori R."/>
            <person name="Piravandi E."/>
            <person name="Massenet O."/>
            <person name="Quigley F."/>
            <person name="Clabauld G."/>
            <person name="Muendlein A."/>
            <person name="Felber R."/>
            <person name="Schnabl S."/>
            <person name="Hiller R."/>
            <person name="Schmidt W."/>
            <person name="Lecharny A."/>
            <person name="Aubourg S."/>
            <person name="Chefdor F."/>
            <person name="Cooke R."/>
            <person name="Berger C."/>
            <person name="Monfort A."/>
            <person name="Casacuberta E."/>
            <person name="Gibbons T."/>
            <person name="Weber N."/>
            <person name="Vandenbol M."/>
            <person name="Bargues M."/>
            <person name="Terol J."/>
            <person name="Torres A."/>
            <person name="Perez-Perez A."/>
            <person name="Purnelle B."/>
            <person name="Bent E."/>
            <person name="Johnson S."/>
            <person name="Tacon D."/>
            <person name="Jesse T."/>
            <person name="Heijnen L."/>
            <person name="Schwarz S."/>
            <person name="Scholler P."/>
            <person name="Heber S."/>
            <person name="Francs P."/>
            <person name="Bielke C."/>
            <person name="Frishman D."/>
            <person name="Haase D."/>
            <person name="Lemcke K."/>
            <person name="Mewes H.-W."/>
            <person name="Stocker S."/>
            <person name="Zaccaria P."/>
            <person name="Bevan M."/>
            <person name="Wilson R.K."/>
            <person name="de la Bastide M."/>
            <person name="Habermann K."/>
            <person name="Parnell L."/>
            <person name="Dedhia N."/>
            <person name="Gnoj L."/>
            <person name="Schutz K."/>
            <person name="Huang E."/>
            <person name="Spiegel L."/>
            <person name="Sekhon M."/>
            <person name="Murray J."/>
            <person name="Sheet P."/>
            <person name="Cordes M."/>
            <person name="Abu-Threideh J."/>
            <person name="Stoneking T."/>
            <person name="Kalicki J."/>
            <person name="Graves T."/>
            <person name="Harmon G."/>
            <person name="Edwards J."/>
            <person name="Latreille P."/>
            <person name="Courtney L."/>
            <person name="Cloud J."/>
            <person name="Abbott A."/>
            <person name="Scott K."/>
            <person name="Johnson D."/>
            <person name="Minx P."/>
            <person name="Bentley D."/>
            <person name="Fulton B."/>
            <person name="Miller N."/>
            <person name="Greco T."/>
            <person name="Kemp K."/>
            <person name="Kramer J."/>
            <person name="Fulton L."/>
            <person name="Mardis E."/>
            <person name="Dante M."/>
            <person name="Pepin K."/>
            <person name="Hillier L.W."/>
            <person name="Nelson J."/>
            <person name="Spieth J."/>
            <person name="Ryan E."/>
            <person name="Andrews S."/>
            <person name="Geisel C."/>
            <person name="Layman D."/>
            <person name="Du H."/>
            <person name="Ali J."/>
            <person name="Berghoff A."/>
            <person name="Jones K."/>
            <person name="Drone K."/>
            <person name="Cotton M."/>
            <person name="Joshu C."/>
            <person name="Antonoiu B."/>
            <person name="Zidanic M."/>
            <person name="Strong C."/>
            <person name="Sun H."/>
            <person name="Lamar B."/>
            <person name="Yordan C."/>
            <person name="Ma P."/>
            <person name="Zhong J."/>
            <person name="Preston R."/>
            <person name="Vil D."/>
            <person name="Shekher M."/>
            <person name="Matero A."/>
            <person name="Shah R."/>
            <person name="Swaby I.K."/>
            <person name="O'Shaughnessy A."/>
            <person name="Rodriguez M."/>
            <person name="Hoffman J."/>
            <person name="Till S."/>
            <person name="Granat S."/>
            <person name="Shohdy N."/>
            <person name="Hasegawa A."/>
            <person name="Hameed A."/>
            <person name="Lodhi M."/>
            <person name="Johnson A."/>
            <person name="Chen E."/>
            <person name="Marra M.A."/>
            <person name="Martienssen R."/>
            <person name="McCombie W.R."/>
        </authorList>
    </citation>
    <scope>NUCLEOTIDE SEQUENCE [LARGE SCALE GENOMIC DNA]</scope>
    <source>
        <strain>cv. Columbia</strain>
    </source>
</reference>
<reference key="3">
    <citation type="journal article" date="2017" name="Plant J.">
        <title>Araport11: a complete reannotation of the Arabidopsis thaliana reference genome.</title>
        <authorList>
            <person name="Cheng C.Y."/>
            <person name="Krishnakumar V."/>
            <person name="Chan A.P."/>
            <person name="Thibaud-Nissen F."/>
            <person name="Schobel S."/>
            <person name="Town C.D."/>
        </authorList>
    </citation>
    <scope>GENOME REANNOTATION</scope>
    <source>
        <strain>cv. Columbia</strain>
    </source>
</reference>
<reference key="4">
    <citation type="submission" date="2004-08" db="EMBL/GenBank/DDBJ databases">
        <title>Arabidopsis ORF clones.</title>
        <authorList>
            <person name="Cheuk R.F."/>
            <person name="Chen H."/>
            <person name="Kim C.J."/>
            <person name="Shinn P."/>
            <person name="Ecker J.R."/>
        </authorList>
    </citation>
    <scope>NUCLEOTIDE SEQUENCE [LARGE SCALE MRNA] (ISOFORM 2)</scope>
    <source>
        <strain>cv. Columbia</strain>
    </source>
</reference>
<reference key="5">
    <citation type="submission" date="2004-09" db="EMBL/GenBank/DDBJ databases">
        <title>Large-scale analysis of RIKEN Arabidopsis full-length (RAFL) cDNAs.</title>
        <authorList>
            <person name="Totoki Y."/>
            <person name="Seki M."/>
            <person name="Ishida J."/>
            <person name="Nakajima M."/>
            <person name="Enju A."/>
            <person name="Kamiya A."/>
            <person name="Narusaka M."/>
            <person name="Shin-i T."/>
            <person name="Nakagawa M."/>
            <person name="Sakamoto N."/>
            <person name="Oishi K."/>
            <person name="Kohara Y."/>
            <person name="Kobayashi M."/>
            <person name="Toyoda A."/>
            <person name="Sakaki Y."/>
            <person name="Sakurai T."/>
            <person name="Iida K."/>
            <person name="Akiyama K."/>
            <person name="Satou M."/>
            <person name="Toyoda T."/>
            <person name="Konagaya A."/>
            <person name="Carninci P."/>
            <person name="Kawai J."/>
            <person name="Hayashizaki Y."/>
            <person name="Shinozaki K."/>
        </authorList>
    </citation>
    <scope>NUCLEOTIDE SEQUENCE [LARGE SCALE MRNA] (ISOFORMS 1 AND 2)</scope>
    <source>
        <strain>cv. Columbia</strain>
    </source>
</reference>
<reference key="6">
    <citation type="journal article" date="2009" name="BMC Genomics">
        <title>Genome wide expression analysis of CBS domain containing proteins in Arabidopsis thaliana (L.) Heynh and Oryza sativa L. reveals their developmental and stress regulation.</title>
        <authorList>
            <person name="Kushwaha H.R."/>
            <person name="Singh A.K."/>
            <person name="Sopory S.K."/>
            <person name="Singla-Pareek S.L."/>
            <person name="Pareek A."/>
        </authorList>
    </citation>
    <scope>GENE FAMILY</scope>
    <scope>NOMENCLATURE</scope>
</reference>
<reference key="7">
    <citation type="journal article" date="2009" name="Plant Physiol.">
        <title>Large-scale Arabidopsis phosphoproteome profiling reveals novel chloroplast kinase substrates and phosphorylation networks.</title>
        <authorList>
            <person name="Reiland S."/>
            <person name="Messerli G."/>
            <person name="Baerenfaller K."/>
            <person name="Gerrits B."/>
            <person name="Endler A."/>
            <person name="Grossmann J."/>
            <person name="Gruissem W."/>
            <person name="Baginsky S."/>
        </authorList>
    </citation>
    <scope>IDENTIFICATION BY MASS SPECTROMETRY [LARGE SCALE ANALYSIS]</scope>
</reference>
<feature type="chain" id="PRO_0000411678" description="DUF21 domain-containing protein At4g14240">
    <location>
        <begin position="1"/>
        <end position="494"/>
    </location>
</feature>
<feature type="topological domain" description="Extracellular" evidence="1">
    <location>
        <begin position="1"/>
        <end position="43"/>
    </location>
</feature>
<feature type="transmembrane region" description="Helical" evidence="1">
    <location>
        <begin position="44"/>
        <end position="64"/>
    </location>
</feature>
<feature type="topological domain" description="Cytoplasmic" evidence="1">
    <location>
        <begin position="65"/>
        <end position="93"/>
    </location>
</feature>
<feature type="transmembrane region" description="Helical" evidence="1">
    <location>
        <begin position="94"/>
        <end position="114"/>
    </location>
</feature>
<feature type="topological domain" description="Extracellular" evidence="1">
    <location>
        <begin position="115"/>
        <end position="121"/>
    </location>
</feature>
<feature type="transmembrane region" description="Helical" evidence="1">
    <location>
        <begin position="122"/>
        <end position="142"/>
    </location>
</feature>
<feature type="topological domain" description="Cytoplasmic" evidence="1">
    <location>
        <begin position="143"/>
        <end position="159"/>
    </location>
</feature>
<feature type="transmembrane region" description="Helical" evidence="1">
    <location>
        <begin position="160"/>
        <end position="180"/>
    </location>
</feature>
<feature type="topological domain" description="Extracellular" evidence="1">
    <location>
        <begin position="181"/>
        <end position="494"/>
    </location>
</feature>
<feature type="domain" description="CNNM transmembrane" evidence="3">
    <location>
        <begin position="31"/>
        <end position="213"/>
    </location>
</feature>
<feature type="domain" description="CBS 1" evidence="2">
    <location>
        <begin position="232"/>
        <end position="292"/>
    </location>
</feature>
<feature type="domain" description="CBS 2" evidence="2">
    <location>
        <begin position="297"/>
        <end position="352"/>
    </location>
</feature>
<feature type="domain" description="CBS 3" evidence="2">
    <location>
        <begin position="364"/>
        <end position="425"/>
    </location>
</feature>
<feature type="region of interest" description="Disordered" evidence="4">
    <location>
        <begin position="459"/>
        <end position="494"/>
    </location>
</feature>
<feature type="glycosylation site" description="N-linked (GlcNAc...) asparagine" evidence="1">
    <location>
        <position position="350"/>
    </location>
</feature>
<feature type="glycosylation site" description="N-linked (GlcNAc...) asparagine" evidence="1">
    <location>
        <position position="385"/>
    </location>
</feature>
<feature type="splice variant" id="VSP_041627" description="In isoform 2." evidence="5 6">
    <location>
        <begin position="74"/>
        <end position="82"/>
    </location>
</feature>
<feature type="sequence conflict" description="In Ref. 1; CAB10203/CAB78466 and 4; AAU05525." evidence="7" ref="1 4">
    <original>F</original>
    <variation>Y</variation>
    <location>
        <position position="134"/>
    </location>
</feature>
<comment type="subcellular location">
    <subcellularLocation>
        <location evidence="7">Membrane</location>
        <topology evidence="7">Multi-pass membrane protein</topology>
    </subcellularLocation>
</comment>
<comment type="alternative products">
    <event type="alternative splicing"/>
    <isoform>
        <id>Q67XQ0-1</id>
        <name>1</name>
        <sequence type="displayed"/>
    </isoform>
    <isoform>
        <id>Q67XQ0-2</id>
        <name>2</name>
        <sequence type="described" ref="VSP_041627"/>
    </isoform>
</comment>
<comment type="sequence caution" evidence="7">
    <conflict type="erroneous gene model prediction">
        <sequence resource="EMBL-CDS" id="CAB10203"/>
    </conflict>
</comment>
<comment type="sequence caution" evidence="7">
    <conflict type="erroneous gene model prediction">
        <sequence resource="EMBL-CDS" id="CAB78466"/>
    </conflict>
</comment>
<accession>Q67XQ0</accession>
<accession>O23282</accession>
<accession>Q66GK0</accession>
<accession>Q680W1</accession>
<protein>
    <recommendedName>
        <fullName>DUF21 domain-containing protein At4g14240</fullName>
    </recommendedName>
    <alternativeName>
        <fullName>CBS domain-containing protein CBSDUF1</fullName>
    </alternativeName>
</protein>
<proteinExistence type="evidence at protein level"/>
<evidence type="ECO:0000255" key="1"/>
<evidence type="ECO:0000255" key="2">
    <source>
        <dbReference type="PROSITE-ProRule" id="PRU00703"/>
    </source>
</evidence>
<evidence type="ECO:0000255" key="3">
    <source>
        <dbReference type="PROSITE-ProRule" id="PRU01193"/>
    </source>
</evidence>
<evidence type="ECO:0000256" key="4">
    <source>
        <dbReference type="SAM" id="MobiDB-lite"/>
    </source>
</evidence>
<evidence type="ECO:0000303" key="5">
    <source ref="4"/>
</evidence>
<evidence type="ECO:0000303" key="6">
    <source ref="5"/>
</evidence>
<evidence type="ECO:0000305" key="7"/>
<dbReference type="EMBL" id="Z97335">
    <property type="protein sequence ID" value="CAB10203.1"/>
    <property type="status" value="ALT_SEQ"/>
    <property type="molecule type" value="Genomic_DNA"/>
</dbReference>
<dbReference type="EMBL" id="AL161538">
    <property type="protein sequence ID" value="CAB78466.1"/>
    <property type="status" value="ALT_SEQ"/>
    <property type="molecule type" value="Genomic_DNA"/>
</dbReference>
<dbReference type="EMBL" id="CP002687">
    <property type="protein sequence ID" value="AEE83399.1"/>
    <property type="molecule type" value="Genomic_DNA"/>
</dbReference>
<dbReference type="EMBL" id="CP002687">
    <property type="protein sequence ID" value="AEE83400.1"/>
    <property type="molecule type" value="Genomic_DNA"/>
</dbReference>
<dbReference type="EMBL" id="BT015402">
    <property type="protein sequence ID" value="AAU05525.1"/>
    <property type="molecule type" value="mRNA"/>
</dbReference>
<dbReference type="EMBL" id="AK176768">
    <property type="protein sequence ID" value="BAD44531.1"/>
    <property type="molecule type" value="mRNA"/>
</dbReference>
<dbReference type="EMBL" id="AK175696">
    <property type="protein sequence ID" value="BAD43459.1"/>
    <property type="molecule type" value="mRNA"/>
</dbReference>
<dbReference type="EMBL" id="AK175756">
    <property type="protein sequence ID" value="BAD43519.1"/>
    <property type="molecule type" value="mRNA"/>
</dbReference>
<dbReference type="EMBL" id="AK176131">
    <property type="protein sequence ID" value="BAD43894.1"/>
    <property type="molecule type" value="mRNA"/>
</dbReference>
<dbReference type="PIR" id="A71404">
    <property type="entry name" value="A71404"/>
</dbReference>
<dbReference type="RefSeq" id="NP_001031633.2">
    <molecule id="Q67XQ0-2"/>
    <property type="nucleotide sequence ID" value="NM_001036556.2"/>
</dbReference>
<dbReference type="RefSeq" id="NP_193160.3">
    <molecule id="Q67XQ0-1"/>
    <property type="nucleotide sequence ID" value="NM_117501.5"/>
</dbReference>
<dbReference type="SMR" id="Q67XQ0"/>
<dbReference type="FunCoup" id="Q67XQ0">
    <property type="interactions" value="1350"/>
</dbReference>
<dbReference type="STRING" id="3702.Q67XQ0"/>
<dbReference type="TCDB" id="1.A.112.1.8">
    <property type="family name" value="the cyclin m mg2+ exporter (cnnm) family"/>
</dbReference>
<dbReference type="GlyCosmos" id="Q67XQ0">
    <property type="glycosylation" value="2 sites, No reported glycans"/>
</dbReference>
<dbReference type="GlyGen" id="Q67XQ0">
    <property type="glycosylation" value="2 sites"/>
</dbReference>
<dbReference type="iPTMnet" id="Q67XQ0"/>
<dbReference type="PaxDb" id="3702-AT4G14240.1"/>
<dbReference type="ProteomicsDB" id="242853">
    <molecule id="Q67XQ0-1"/>
</dbReference>
<dbReference type="EnsemblPlants" id="AT4G14240.1">
    <molecule id="Q67XQ0-1"/>
    <property type="protein sequence ID" value="AT4G14240.1"/>
    <property type="gene ID" value="AT4G14240"/>
</dbReference>
<dbReference type="EnsemblPlants" id="AT4G14240.2">
    <molecule id="Q67XQ0-2"/>
    <property type="protein sequence ID" value="AT4G14240.2"/>
    <property type="gene ID" value="AT4G14240"/>
</dbReference>
<dbReference type="GeneID" id="827065"/>
<dbReference type="Gramene" id="AT4G14240.1">
    <molecule id="Q67XQ0-1"/>
    <property type="protein sequence ID" value="AT4G14240.1"/>
    <property type="gene ID" value="AT4G14240"/>
</dbReference>
<dbReference type="Gramene" id="AT4G14240.2">
    <molecule id="Q67XQ0-2"/>
    <property type="protein sequence ID" value="AT4G14240.2"/>
    <property type="gene ID" value="AT4G14240"/>
</dbReference>
<dbReference type="KEGG" id="ath:AT4G14240"/>
<dbReference type="Araport" id="AT4G14240"/>
<dbReference type="TAIR" id="AT4G14240"/>
<dbReference type="eggNOG" id="KOG2118">
    <property type="taxonomic scope" value="Eukaryota"/>
</dbReference>
<dbReference type="InParanoid" id="Q67XQ0"/>
<dbReference type="OMA" id="FMKRQHS"/>
<dbReference type="OrthoDB" id="5353557at2759"/>
<dbReference type="PhylomeDB" id="Q67XQ0"/>
<dbReference type="PRO" id="PR:Q67XQ0"/>
<dbReference type="Proteomes" id="UP000006548">
    <property type="component" value="Chromosome 4"/>
</dbReference>
<dbReference type="ExpressionAtlas" id="Q67XQ0">
    <property type="expression patterns" value="baseline and differential"/>
</dbReference>
<dbReference type="GO" id="GO:0016020">
    <property type="term" value="C:membrane"/>
    <property type="evidence" value="ECO:0007669"/>
    <property type="project" value="UniProtKB-SubCell"/>
</dbReference>
<dbReference type="GO" id="GO:0010960">
    <property type="term" value="P:magnesium ion homeostasis"/>
    <property type="evidence" value="ECO:0007669"/>
    <property type="project" value="InterPro"/>
</dbReference>
<dbReference type="CDD" id="cd04590">
    <property type="entry name" value="CBS_pair_CorC_HlyC_assoc"/>
    <property type="match status" value="1"/>
</dbReference>
<dbReference type="FunFam" id="3.10.580.10:FF:000021">
    <property type="entry name" value="DUF21 domain-containing protein At4g14240-like"/>
    <property type="match status" value="1"/>
</dbReference>
<dbReference type="FunFam" id="3.10.580.10:FF:000042">
    <property type="entry name" value="DUF21 domain-containing protein isoform A"/>
    <property type="match status" value="1"/>
</dbReference>
<dbReference type="Gene3D" id="3.10.580.10">
    <property type="entry name" value="CBS-domain"/>
    <property type="match status" value="2"/>
</dbReference>
<dbReference type="InterPro" id="IPR045095">
    <property type="entry name" value="ACDP"/>
</dbReference>
<dbReference type="InterPro" id="IPR046342">
    <property type="entry name" value="CBS_dom_sf"/>
</dbReference>
<dbReference type="InterPro" id="IPR002550">
    <property type="entry name" value="CNNM"/>
</dbReference>
<dbReference type="InterPro" id="IPR044751">
    <property type="entry name" value="Ion_transp-like_CBS"/>
</dbReference>
<dbReference type="PANTHER" id="PTHR12064">
    <property type="entry name" value="METAL TRANSPORTER CNNM"/>
    <property type="match status" value="1"/>
</dbReference>
<dbReference type="PANTHER" id="PTHR12064:SF97">
    <property type="entry name" value="METAL TRANSPORTER CNNM-5"/>
    <property type="match status" value="1"/>
</dbReference>
<dbReference type="Pfam" id="PF01595">
    <property type="entry name" value="CNNM"/>
    <property type="match status" value="1"/>
</dbReference>
<dbReference type="SUPFAM" id="SSF54631">
    <property type="entry name" value="CBS-domain pair"/>
    <property type="match status" value="1"/>
</dbReference>
<dbReference type="PROSITE" id="PS51371">
    <property type="entry name" value="CBS"/>
    <property type="match status" value="2"/>
</dbReference>
<dbReference type="PROSITE" id="PS51846">
    <property type="entry name" value="CNNM"/>
    <property type="match status" value="1"/>
</dbReference>
<organism>
    <name type="scientific">Arabidopsis thaliana</name>
    <name type="common">Mouse-ear cress</name>
    <dbReference type="NCBI Taxonomy" id="3702"/>
    <lineage>
        <taxon>Eukaryota</taxon>
        <taxon>Viridiplantae</taxon>
        <taxon>Streptophyta</taxon>
        <taxon>Embryophyta</taxon>
        <taxon>Tracheophyta</taxon>
        <taxon>Spermatophyta</taxon>
        <taxon>Magnoliopsida</taxon>
        <taxon>eudicotyledons</taxon>
        <taxon>Gunneridae</taxon>
        <taxon>Pentapetalae</taxon>
        <taxon>rosids</taxon>
        <taxon>malvids</taxon>
        <taxon>Brassicales</taxon>
        <taxon>Brassicaceae</taxon>
        <taxon>Camelineae</taxon>
        <taxon>Arabidopsis</taxon>
    </lineage>
</organism>
<sequence>MHLINAVAAARILSGIGQSNGNNGGEAIPFGSFEWITYAGISCFLVLFAGIMSGLTLGLMSLGLVELEILQRSGTPNEKKQAAAIFPVVQKQHQLLVTLLLCNAMAMEGLPIYLDKLFNEYVAIILSVTFVLAFGEVIPQAICTRYGLAVGANFVWLVRILMTLCYPIAFPIGKILDLVLGHNDALFRRAQLKALVSIHSQEAGKGGELTHDETTIISGALDLTEKTAQEAMTPIESTFSLDVNSKLDWEAMGKILARGHSRVPVYSGNPKNVIGLLLVKSLLTVRPETETLVSAVCIRRIPRVPADMPLYDILNEFQKGSSHMAAVVKVKGKSKVPPSTLLEEHTDESNDSDLTAPLLLKREGNHDNVIVTIDKANGQSFFQNNESGPHGFSHTSEAIEDGEVIGIITLEDVFEELLQEEIVDETDEYVDVHKRIRVAAAAAASSIARAPSSRKLLAQKGTGGQNKQGQTNKVPGQEQDKMLGTITEPIRRNN</sequence>